<organism>
    <name type="scientific">Shigella boydii serotype 4 (strain Sb227)</name>
    <dbReference type="NCBI Taxonomy" id="300268"/>
    <lineage>
        <taxon>Bacteria</taxon>
        <taxon>Pseudomonadati</taxon>
        <taxon>Pseudomonadota</taxon>
        <taxon>Gammaproteobacteria</taxon>
        <taxon>Enterobacterales</taxon>
        <taxon>Enterobacteriaceae</taxon>
        <taxon>Shigella</taxon>
    </lineage>
</organism>
<protein>
    <recommendedName>
        <fullName evidence="1">Ribonuclease H</fullName>
        <shortName evidence="1">RNase H</shortName>
        <ecNumber evidence="1">3.1.26.4</ecNumber>
    </recommendedName>
</protein>
<accession>Q325T2</accession>
<comment type="function">
    <text evidence="1">Endonuclease that specifically degrades the RNA of RNA-DNA hybrids.</text>
</comment>
<comment type="catalytic activity">
    <reaction evidence="1">
        <text>Endonucleolytic cleavage to 5'-phosphomonoester.</text>
        <dbReference type="EC" id="3.1.26.4"/>
    </reaction>
</comment>
<comment type="cofactor">
    <cofactor evidence="1">
        <name>Mg(2+)</name>
        <dbReference type="ChEBI" id="CHEBI:18420"/>
    </cofactor>
    <text evidence="1">Binds 1 Mg(2+) ion per subunit. May bind a second metal ion at a regulatory site, or after substrate binding.</text>
</comment>
<comment type="subunit">
    <text evidence="1">Monomer.</text>
</comment>
<comment type="subcellular location">
    <subcellularLocation>
        <location evidence="1">Cytoplasm</location>
    </subcellularLocation>
</comment>
<comment type="similarity">
    <text evidence="1">Belongs to the RNase H family.</text>
</comment>
<feature type="chain" id="PRO_1000074677" description="Ribonuclease H">
    <location>
        <begin position="1"/>
        <end position="155"/>
    </location>
</feature>
<feature type="domain" description="RNase H type-1" evidence="2">
    <location>
        <begin position="1"/>
        <end position="142"/>
    </location>
</feature>
<feature type="binding site" evidence="1">
    <location>
        <position position="10"/>
    </location>
    <ligand>
        <name>Mg(2+)</name>
        <dbReference type="ChEBI" id="CHEBI:18420"/>
        <label>1</label>
    </ligand>
</feature>
<feature type="binding site" evidence="1">
    <location>
        <position position="10"/>
    </location>
    <ligand>
        <name>Mg(2+)</name>
        <dbReference type="ChEBI" id="CHEBI:18420"/>
        <label>2</label>
    </ligand>
</feature>
<feature type="binding site" evidence="1">
    <location>
        <position position="48"/>
    </location>
    <ligand>
        <name>Mg(2+)</name>
        <dbReference type="ChEBI" id="CHEBI:18420"/>
        <label>1</label>
    </ligand>
</feature>
<feature type="binding site" evidence="1">
    <location>
        <position position="70"/>
    </location>
    <ligand>
        <name>Mg(2+)</name>
        <dbReference type="ChEBI" id="CHEBI:18420"/>
        <label>1</label>
    </ligand>
</feature>
<feature type="binding site" evidence="1">
    <location>
        <position position="134"/>
    </location>
    <ligand>
        <name>Mg(2+)</name>
        <dbReference type="ChEBI" id="CHEBI:18420"/>
        <label>2</label>
    </ligand>
</feature>
<gene>
    <name evidence="1" type="primary">rnhA</name>
    <name type="ordered locus">SBO_0203</name>
</gene>
<proteinExistence type="inferred from homology"/>
<sequence>MLKQVEIFTDGSCLGNPGPGGYGAILRYRGREKTFSAGYTRTTNNRMELMAAIVALEALKEHCEVILSTDSQYVRQGITQWIHNWKKRGWKTADKKPVKNVDLWQRLDAALGQHQIKWEWVKGHAGHPENERCDELARAAAMNPTLEDTGYQVEV</sequence>
<reference key="1">
    <citation type="journal article" date="2005" name="Nucleic Acids Res.">
        <title>Genome dynamics and diversity of Shigella species, the etiologic agents of bacillary dysentery.</title>
        <authorList>
            <person name="Yang F."/>
            <person name="Yang J."/>
            <person name="Zhang X."/>
            <person name="Chen L."/>
            <person name="Jiang Y."/>
            <person name="Yan Y."/>
            <person name="Tang X."/>
            <person name="Wang J."/>
            <person name="Xiong Z."/>
            <person name="Dong J."/>
            <person name="Xue Y."/>
            <person name="Zhu Y."/>
            <person name="Xu X."/>
            <person name="Sun L."/>
            <person name="Chen S."/>
            <person name="Nie H."/>
            <person name="Peng J."/>
            <person name="Xu J."/>
            <person name="Wang Y."/>
            <person name="Yuan Z."/>
            <person name="Wen Y."/>
            <person name="Yao Z."/>
            <person name="Shen Y."/>
            <person name="Qiang B."/>
            <person name="Hou Y."/>
            <person name="Yu J."/>
            <person name="Jin Q."/>
        </authorList>
    </citation>
    <scope>NUCLEOTIDE SEQUENCE [LARGE SCALE GENOMIC DNA]</scope>
    <source>
        <strain>Sb227</strain>
    </source>
</reference>
<name>RNH_SHIBS</name>
<evidence type="ECO:0000255" key="1">
    <source>
        <dbReference type="HAMAP-Rule" id="MF_00042"/>
    </source>
</evidence>
<evidence type="ECO:0000255" key="2">
    <source>
        <dbReference type="PROSITE-ProRule" id="PRU00408"/>
    </source>
</evidence>
<keyword id="KW-0963">Cytoplasm</keyword>
<keyword id="KW-0255">Endonuclease</keyword>
<keyword id="KW-0378">Hydrolase</keyword>
<keyword id="KW-0460">Magnesium</keyword>
<keyword id="KW-0479">Metal-binding</keyword>
<keyword id="KW-0540">Nuclease</keyword>
<dbReference type="EC" id="3.1.26.4" evidence="1"/>
<dbReference type="EMBL" id="CP000036">
    <property type="protein sequence ID" value="ABB64926.1"/>
    <property type="molecule type" value="Genomic_DNA"/>
</dbReference>
<dbReference type="RefSeq" id="WP_000917883.1">
    <property type="nucleotide sequence ID" value="NC_007613.1"/>
</dbReference>
<dbReference type="SMR" id="Q325T2"/>
<dbReference type="GeneID" id="93777209"/>
<dbReference type="KEGG" id="sbo:SBO_0203"/>
<dbReference type="HOGENOM" id="CLU_030894_6_0_6"/>
<dbReference type="Proteomes" id="UP000007067">
    <property type="component" value="Chromosome"/>
</dbReference>
<dbReference type="GO" id="GO:0005737">
    <property type="term" value="C:cytoplasm"/>
    <property type="evidence" value="ECO:0007669"/>
    <property type="project" value="UniProtKB-SubCell"/>
</dbReference>
<dbReference type="GO" id="GO:0000287">
    <property type="term" value="F:magnesium ion binding"/>
    <property type="evidence" value="ECO:0007669"/>
    <property type="project" value="UniProtKB-UniRule"/>
</dbReference>
<dbReference type="GO" id="GO:0003676">
    <property type="term" value="F:nucleic acid binding"/>
    <property type="evidence" value="ECO:0007669"/>
    <property type="project" value="InterPro"/>
</dbReference>
<dbReference type="GO" id="GO:0004523">
    <property type="term" value="F:RNA-DNA hybrid ribonuclease activity"/>
    <property type="evidence" value="ECO:0007669"/>
    <property type="project" value="UniProtKB-UniRule"/>
</dbReference>
<dbReference type="GO" id="GO:0043137">
    <property type="term" value="P:DNA replication, removal of RNA primer"/>
    <property type="evidence" value="ECO:0007669"/>
    <property type="project" value="TreeGrafter"/>
</dbReference>
<dbReference type="CDD" id="cd09278">
    <property type="entry name" value="RNase_HI_prokaryote_like"/>
    <property type="match status" value="1"/>
</dbReference>
<dbReference type="FunFam" id="3.30.420.10:FF:000008">
    <property type="entry name" value="Ribonuclease H"/>
    <property type="match status" value="1"/>
</dbReference>
<dbReference type="Gene3D" id="3.30.420.10">
    <property type="entry name" value="Ribonuclease H-like superfamily/Ribonuclease H"/>
    <property type="match status" value="1"/>
</dbReference>
<dbReference type="HAMAP" id="MF_00042">
    <property type="entry name" value="RNase_H"/>
    <property type="match status" value="1"/>
</dbReference>
<dbReference type="InterPro" id="IPR050092">
    <property type="entry name" value="RNase_H"/>
</dbReference>
<dbReference type="InterPro" id="IPR012337">
    <property type="entry name" value="RNaseH-like_sf"/>
</dbReference>
<dbReference type="InterPro" id="IPR002156">
    <property type="entry name" value="RNaseH_domain"/>
</dbReference>
<dbReference type="InterPro" id="IPR036397">
    <property type="entry name" value="RNaseH_sf"/>
</dbReference>
<dbReference type="InterPro" id="IPR022892">
    <property type="entry name" value="RNaseHI"/>
</dbReference>
<dbReference type="NCBIfam" id="NF001236">
    <property type="entry name" value="PRK00203.1"/>
    <property type="match status" value="1"/>
</dbReference>
<dbReference type="PANTHER" id="PTHR10642">
    <property type="entry name" value="RIBONUCLEASE H1"/>
    <property type="match status" value="1"/>
</dbReference>
<dbReference type="PANTHER" id="PTHR10642:SF26">
    <property type="entry name" value="RIBONUCLEASE H1"/>
    <property type="match status" value="1"/>
</dbReference>
<dbReference type="Pfam" id="PF00075">
    <property type="entry name" value="RNase_H"/>
    <property type="match status" value="1"/>
</dbReference>
<dbReference type="SUPFAM" id="SSF53098">
    <property type="entry name" value="Ribonuclease H-like"/>
    <property type="match status" value="1"/>
</dbReference>
<dbReference type="PROSITE" id="PS50879">
    <property type="entry name" value="RNASE_H_1"/>
    <property type="match status" value="1"/>
</dbReference>